<dbReference type="EC" id="2.7.1.6" evidence="1"/>
<dbReference type="EMBL" id="CP001063">
    <property type="protein sequence ID" value="ACD09246.1"/>
    <property type="molecule type" value="Genomic_DNA"/>
</dbReference>
<dbReference type="RefSeq" id="WP_000053444.1">
    <property type="nucleotide sequence ID" value="NC_010658.1"/>
</dbReference>
<dbReference type="SMR" id="B2TUY8"/>
<dbReference type="STRING" id="344609.SbBS512_E0678"/>
<dbReference type="KEGG" id="sbc:SbBS512_E0678"/>
<dbReference type="HOGENOM" id="CLU_017814_2_1_6"/>
<dbReference type="UniPathway" id="UPA00214"/>
<dbReference type="Proteomes" id="UP000001030">
    <property type="component" value="Chromosome"/>
</dbReference>
<dbReference type="GO" id="GO:0005829">
    <property type="term" value="C:cytosol"/>
    <property type="evidence" value="ECO:0007669"/>
    <property type="project" value="TreeGrafter"/>
</dbReference>
<dbReference type="GO" id="GO:0005524">
    <property type="term" value="F:ATP binding"/>
    <property type="evidence" value="ECO:0007669"/>
    <property type="project" value="UniProtKB-UniRule"/>
</dbReference>
<dbReference type="GO" id="GO:0004335">
    <property type="term" value="F:galactokinase activity"/>
    <property type="evidence" value="ECO:0007669"/>
    <property type="project" value="UniProtKB-UniRule"/>
</dbReference>
<dbReference type="GO" id="GO:0000287">
    <property type="term" value="F:magnesium ion binding"/>
    <property type="evidence" value="ECO:0007669"/>
    <property type="project" value="UniProtKB-UniRule"/>
</dbReference>
<dbReference type="GO" id="GO:0006012">
    <property type="term" value="P:galactose metabolic process"/>
    <property type="evidence" value="ECO:0007669"/>
    <property type="project" value="UniProtKB-UniRule"/>
</dbReference>
<dbReference type="FunFam" id="3.30.230.10:FF:000017">
    <property type="entry name" value="Galactokinase"/>
    <property type="match status" value="1"/>
</dbReference>
<dbReference type="FunFam" id="3.30.70.890:FF:000001">
    <property type="entry name" value="Galactokinase"/>
    <property type="match status" value="1"/>
</dbReference>
<dbReference type="Gene3D" id="3.30.230.10">
    <property type="match status" value="1"/>
</dbReference>
<dbReference type="Gene3D" id="3.30.70.890">
    <property type="entry name" value="GHMP kinase, C-terminal domain"/>
    <property type="match status" value="1"/>
</dbReference>
<dbReference type="HAMAP" id="MF_00246">
    <property type="entry name" value="Galactokinase"/>
    <property type="match status" value="1"/>
</dbReference>
<dbReference type="InterPro" id="IPR000705">
    <property type="entry name" value="Galactokinase"/>
</dbReference>
<dbReference type="InterPro" id="IPR022963">
    <property type="entry name" value="Galactokinase_bac"/>
</dbReference>
<dbReference type="InterPro" id="IPR019741">
    <property type="entry name" value="Galactokinase_CS"/>
</dbReference>
<dbReference type="InterPro" id="IPR019539">
    <property type="entry name" value="GalKase_N"/>
</dbReference>
<dbReference type="InterPro" id="IPR013750">
    <property type="entry name" value="GHMP_kinase_C_dom"/>
</dbReference>
<dbReference type="InterPro" id="IPR036554">
    <property type="entry name" value="GHMP_kinase_C_sf"/>
</dbReference>
<dbReference type="InterPro" id="IPR006204">
    <property type="entry name" value="GHMP_kinase_N_dom"/>
</dbReference>
<dbReference type="InterPro" id="IPR006203">
    <property type="entry name" value="GHMP_knse_ATP-bd_CS"/>
</dbReference>
<dbReference type="InterPro" id="IPR006206">
    <property type="entry name" value="Mevalonate/galactokinase"/>
</dbReference>
<dbReference type="InterPro" id="IPR020568">
    <property type="entry name" value="Ribosomal_Su5_D2-typ_SF"/>
</dbReference>
<dbReference type="InterPro" id="IPR014721">
    <property type="entry name" value="Ribsml_uS5_D2-typ_fold_subgr"/>
</dbReference>
<dbReference type="NCBIfam" id="TIGR00131">
    <property type="entry name" value="gal_kin"/>
    <property type="match status" value="1"/>
</dbReference>
<dbReference type="NCBIfam" id="NF003472">
    <property type="entry name" value="PRK05101.1"/>
    <property type="match status" value="1"/>
</dbReference>
<dbReference type="PANTHER" id="PTHR10457:SF7">
    <property type="entry name" value="GALACTOKINASE-RELATED"/>
    <property type="match status" value="1"/>
</dbReference>
<dbReference type="PANTHER" id="PTHR10457">
    <property type="entry name" value="MEVALONATE KINASE/GALACTOKINASE"/>
    <property type="match status" value="1"/>
</dbReference>
<dbReference type="Pfam" id="PF10509">
    <property type="entry name" value="GalKase_gal_bdg"/>
    <property type="match status" value="1"/>
</dbReference>
<dbReference type="Pfam" id="PF08544">
    <property type="entry name" value="GHMP_kinases_C"/>
    <property type="match status" value="1"/>
</dbReference>
<dbReference type="Pfam" id="PF00288">
    <property type="entry name" value="GHMP_kinases_N"/>
    <property type="match status" value="1"/>
</dbReference>
<dbReference type="PIRSF" id="PIRSF000530">
    <property type="entry name" value="Galactokinase"/>
    <property type="match status" value="1"/>
</dbReference>
<dbReference type="PRINTS" id="PR00473">
    <property type="entry name" value="GALCTOKINASE"/>
</dbReference>
<dbReference type="PRINTS" id="PR00959">
    <property type="entry name" value="MEVGALKINASE"/>
</dbReference>
<dbReference type="SUPFAM" id="SSF55060">
    <property type="entry name" value="GHMP Kinase, C-terminal domain"/>
    <property type="match status" value="1"/>
</dbReference>
<dbReference type="SUPFAM" id="SSF54211">
    <property type="entry name" value="Ribosomal protein S5 domain 2-like"/>
    <property type="match status" value="1"/>
</dbReference>
<dbReference type="PROSITE" id="PS00106">
    <property type="entry name" value="GALACTOKINASE"/>
    <property type="match status" value="1"/>
</dbReference>
<dbReference type="PROSITE" id="PS00627">
    <property type="entry name" value="GHMP_KINASES_ATP"/>
    <property type="match status" value="1"/>
</dbReference>
<sequence length="382" mass="41469">MSLKEKTQSLFANAFGYPATHTIQAPGRVNLIGEHTDYNDGFVLPCAIDYQTVISCAPRDDRKVRVMAADYENQLDEFSLNAPIVAHENYQWANYVRGVVKHLQLRNNSFGGVDMVISGNVPQGAGLSSSASLEVAVGTVLQQLYHLPLDGAQIALNGQEAENQFVGCNCGIMDQLISALGKKDHSLLIDCRSLGTKAVSMPKGVAVVIINSNFKRTLVGSEYNTRREQCETGARFFQQPALRDVTIEEFNAVAHELDPIVAKRVRHILTENARTVEAASALEQGDLKRMGELMAESHASMRDDFEITVPQIDTLVEIVKAVIGDKGGVRMTGGGFGGCIVALIPEELVPAVQQAVAEQYEAKIGIKETFYVCKPSQGAGQC</sequence>
<feature type="chain" id="PRO_1000100846" description="Galactokinase">
    <location>
        <begin position="1"/>
        <end position="382"/>
    </location>
</feature>
<feature type="active site" description="Proton acceptor" evidence="1">
    <location>
        <position position="174"/>
    </location>
</feature>
<feature type="binding site" evidence="1">
    <location>
        <begin position="34"/>
        <end position="37"/>
    </location>
    <ligand>
        <name>substrate</name>
    </ligand>
</feature>
<feature type="binding site" evidence="1">
    <location>
        <begin position="124"/>
        <end position="130"/>
    </location>
    <ligand>
        <name>ATP</name>
        <dbReference type="ChEBI" id="CHEBI:30616"/>
    </ligand>
</feature>
<feature type="binding site" evidence="1">
    <location>
        <position position="130"/>
    </location>
    <ligand>
        <name>Mg(2+)</name>
        <dbReference type="ChEBI" id="CHEBI:18420"/>
    </ligand>
</feature>
<feature type="binding site" evidence="1">
    <location>
        <position position="162"/>
    </location>
    <ligand>
        <name>Mg(2+)</name>
        <dbReference type="ChEBI" id="CHEBI:18420"/>
    </ligand>
</feature>
<feature type="binding site" evidence="1">
    <location>
        <position position="223"/>
    </location>
    <ligand>
        <name>substrate</name>
    </ligand>
</feature>
<feature type="site" description="Transition state stabilizer" evidence="1">
    <location>
        <position position="28"/>
    </location>
</feature>
<gene>
    <name evidence="1" type="primary">galK</name>
    <name type="ordered locus">SbBS512_E0678</name>
</gene>
<comment type="function">
    <text evidence="1">Catalyzes the transfer of the gamma-phosphate of ATP to D-galactose to form alpha-D-galactose-1-phosphate (Gal-1-P).</text>
</comment>
<comment type="catalytic activity">
    <reaction evidence="1">
        <text>alpha-D-galactose + ATP = alpha-D-galactose 1-phosphate + ADP + H(+)</text>
        <dbReference type="Rhea" id="RHEA:13553"/>
        <dbReference type="ChEBI" id="CHEBI:15378"/>
        <dbReference type="ChEBI" id="CHEBI:28061"/>
        <dbReference type="ChEBI" id="CHEBI:30616"/>
        <dbReference type="ChEBI" id="CHEBI:58336"/>
        <dbReference type="ChEBI" id="CHEBI:456216"/>
        <dbReference type="EC" id="2.7.1.6"/>
    </reaction>
</comment>
<comment type="pathway">
    <text evidence="1">Carbohydrate metabolism; galactose metabolism.</text>
</comment>
<comment type="subcellular location">
    <subcellularLocation>
        <location evidence="1">Cytoplasm</location>
    </subcellularLocation>
</comment>
<comment type="similarity">
    <text evidence="1">Belongs to the GHMP kinase family. GalK subfamily.</text>
</comment>
<keyword id="KW-0067">ATP-binding</keyword>
<keyword id="KW-0119">Carbohydrate metabolism</keyword>
<keyword id="KW-0963">Cytoplasm</keyword>
<keyword id="KW-0299">Galactose metabolism</keyword>
<keyword id="KW-0418">Kinase</keyword>
<keyword id="KW-0460">Magnesium</keyword>
<keyword id="KW-0479">Metal-binding</keyword>
<keyword id="KW-0547">Nucleotide-binding</keyword>
<keyword id="KW-1185">Reference proteome</keyword>
<keyword id="KW-0808">Transferase</keyword>
<reference key="1">
    <citation type="submission" date="2008-05" db="EMBL/GenBank/DDBJ databases">
        <title>Complete sequence of Shigella boydii serotype 18 strain BS512.</title>
        <authorList>
            <person name="Rasko D.A."/>
            <person name="Rosovitz M."/>
            <person name="Maurelli A.T."/>
            <person name="Myers G."/>
            <person name="Seshadri R."/>
            <person name="Cer R."/>
            <person name="Jiang L."/>
            <person name="Ravel J."/>
            <person name="Sebastian Y."/>
        </authorList>
    </citation>
    <scope>NUCLEOTIDE SEQUENCE [LARGE SCALE GENOMIC DNA]</scope>
    <source>
        <strain>CDC 3083-94 / BS512</strain>
    </source>
</reference>
<accession>B2TUY8</accession>
<name>GAL1_SHIB3</name>
<organism>
    <name type="scientific">Shigella boydii serotype 18 (strain CDC 3083-94 / BS512)</name>
    <dbReference type="NCBI Taxonomy" id="344609"/>
    <lineage>
        <taxon>Bacteria</taxon>
        <taxon>Pseudomonadati</taxon>
        <taxon>Pseudomonadota</taxon>
        <taxon>Gammaproteobacteria</taxon>
        <taxon>Enterobacterales</taxon>
        <taxon>Enterobacteriaceae</taxon>
        <taxon>Shigella</taxon>
    </lineage>
</organism>
<protein>
    <recommendedName>
        <fullName evidence="1">Galactokinase</fullName>
        <ecNumber evidence="1">2.7.1.6</ecNumber>
    </recommendedName>
    <alternativeName>
        <fullName evidence="1">Galactose kinase</fullName>
    </alternativeName>
</protein>
<evidence type="ECO:0000255" key="1">
    <source>
        <dbReference type="HAMAP-Rule" id="MF_00246"/>
    </source>
</evidence>
<proteinExistence type="inferred from homology"/>